<name>GCH1_PYRNV</name>
<protein>
    <recommendedName>
        <fullName evidence="1">GTP cyclohydrolase 1</fullName>
        <ecNumber evidence="1">3.5.4.16</ecNumber>
    </recommendedName>
    <alternativeName>
        <fullName evidence="1">GTP cyclohydrolase I</fullName>
        <shortName evidence="1">GTP-CH-I</shortName>
    </alternativeName>
</protein>
<sequence length="187" mass="20951">MVLEKRGVVKPEEGVRALLEHLGEDVTRPGVVDTPKRFVKALGELTRGLREPPPEVVFFPLEYDAEPGPVVIENISAVSLCEHHLLPILLSVSVAYIPGDGVPGLSKVIRLVKWAAARPIMQERFTEWLADLLMEKLRARAVAVEVCGVHMCSFIRGVRDEHHNMVTRAKRGDIDVKLRCRRPPLCR</sequence>
<proteinExistence type="inferred from homology"/>
<organism>
    <name type="scientific">Pyrobaculum neutrophilum (strain DSM 2338 / JCM 9278 / NBRC 100436 / V24Sta)</name>
    <name type="common">Thermoproteus neutrophilus</name>
    <dbReference type="NCBI Taxonomy" id="444157"/>
    <lineage>
        <taxon>Archaea</taxon>
        <taxon>Thermoproteota</taxon>
        <taxon>Thermoprotei</taxon>
        <taxon>Thermoproteales</taxon>
        <taxon>Thermoproteaceae</taxon>
        <taxon>Pyrobaculum</taxon>
    </lineage>
</organism>
<gene>
    <name evidence="1" type="primary">folE</name>
    <name type="ordered locus">Tneu_0661</name>
</gene>
<evidence type="ECO:0000255" key="1">
    <source>
        <dbReference type="HAMAP-Rule" id="MF_00223"/>
    </source>
</evidence>
<comment type="catalytic activity">
    <reaction evidence="1">
        <text>GTP + H2O = 7,8-dihydroneopterin 3'-triphosphate + formate + H(+)</text>
        <dbReference type="Rhea" id="RHEA:17473"/>
        <dbReference type="ChEBI" id="CHEBI:15377"/>
        <dbReference type="ChEBI" id="CHEBI:15378"/>
        <dbReference type="ChEBI" id="CHEBI:15740"/>
        <dbReference type="ChEBI" id="CHEBI:37565"/>
        <dbReference type="ChEBI" id="CHEBI:58462"/>
        <dbReference type="EC" id="3.5.4.16"/>
    </reaction>
</comment>
<comment type="pathway">
    <text evidence="1">Cofactor biosynthesis; 7,8-dihydroneopterin triphosphate biosynthesis; 7,8-dihydroneopterin triphosphate from GTP: step 1/1.</text>
</comment>
<comment type="subunit">
    <text evidence="1">Homomer.</text>
</comment>
<comment type="similarity">
    <text evidence="1">Belongs to the GTP cyclohydrolase I family.</text>
</comment>
<accession>B1YCT7</accession>
<dbReference type="EC" id="3.5.4.16" evidence="1"/>
<dbReference type="EMBL" id="CP001014">
    <property type="protein sequence ID" value="ACB39600.1"/>
    <property type="molecule type" value="Genomic_DNA"/>
</dbReference>
<dbReference type="RefSeq" id="WP_012350020.1">
    <property type="nucleotide sequence ID" value="NC_010525.1"/>
</dbReference>
<dbReference type="SMR" id="B1YCT7"/>
<dbReference type="STRING" id="444157.Tneu_0661"/>
<dbReference type="GeneID" id="6165221"/>
<dbReference type="KEGG" id="tne:Tneu_0661"/>
<dbReference type="eggNOG" id="arCOG04542">
    <property type="taxonomic scope" value="Archaea"/>
</dbReference>
<dbReference type="HOGENOM" id="CLU_049768_3_3_2"/>
<dbReference type="OrthoDB" id="8438at2157"/>
<dbReference type="UniPathway" id="UPA00848">
    <property type="reaction ID" value="UER00151"/>
</dbReference>
<dbReference type="Proteomes" id="UP000001694">
    <property type="component" value="Chromosome"/>
</dbReference>
<dbReference type="GO" id="GO:0005737">
    <property type="term" value="C:cytoplasm"/>
    <property type="evidence" value="ECO:0007669"/>
    <property type="project" value="TreeGrafter"/>
</dbReference>
<dbReference type="GO" id="GO:0005525">
    <property type="term" value="F:GTP binding"/>
    <property type="evidence" value="ECO:0007669"/>
    <property type="project" value="UniProtKB-KW"/>
</dbReference>
<dbReference type="GO" id="GO:0003934">
    <property type="term" value="F:GTP cyclohydrolase I activity"/>
    <property type="evidence" value="ECO:0007669"/>
    <property type="project" value="UniProtKB-UniRule"/>
</dbReference>
<dbReference type="GO" id="GO:0008270">
    <property type="term" value="F:zinc ion binding"/>
    <property type="evidence" value="ECO:0007669"/>
    <property type="project" value="UniProtKB-UniRule"/>
</dbReference>
<dbReference type="GO" id="GO:0006730">
    <property type="term" value="P:one-carbon metabolic process"/>
    <property type="evidence" value="ECO:0007669"/>
    <property type="project" value="UniProtKB-UniRule"/>
</dbReference>
<dbReference type="GO" id="GO:0006729">
    <property type="term" value="P:tetrahydrobiopterin biosynthetic process"/>
    <property type="evidence" value="ECO:0007669"/>
    <property type="project" value="TreeGrafter"/>
</dbReference>
<dbReference type="GO" id="GO:0046654">
    <property type="term" value="P:tetrahydrofolate biosynthetic process"/>
    <property type="evidence" value="ECO:0007669"/>
    <property type="project" value="UniProtKB-UniRule"/>
</dbReference>
<dbReference type="Gene3D" id="1.10.286.10">
    <property type="match status" value="1"/>
</dbReference>
<dbReference type="Gene3D" id="3.30.1130.10">
    <property type="match status" value="1"/>
</dbReference>
<dbReference type="HAMAP" id="MF_00223">
    <property type="entry name" value="FolE"/>
    <property type="match status" value="1"/>
</dbReference>
<dbReference type="InterPro" id="IPR043133">
    <property type="entry name" value="GTP-CH-I_C/QueF"/>
</dbReference>
<dbReference type="InterPro" id="IPR043134">
    <property type="entry name" value="GTP-CH-I_N"/>
</dbReference>
<dbReference type="InterPro" id="IPR001474">
    <property type="entry name" value="GTP_CycHdrlase_I"/>
</dbReference>
<dbReference type="InterPro" id="IPR020602">
    <property type="entry name" value="GTP_CycHdrlase_I_dom"/>
</dbReference>
<dbReference type="NCBIfam" id="NF006826">
    <property type="entry name" value="PRK09347.1-3"/>
    <property type="match status" value="1"/>
</dbReference>
<dbReference type="PANTHER" id="PTHR11109:SF7">
    <property type="entry name" value="GTP CYCLOHYDROLASE 1"/>
    <property type="match status" value="1"/>
</dbReference>
<dbReference type="PANTHER" id="PTHR11109">
    <property type="entry name" value="GTP CYCLOHYDROLASE I"/>
    <property type="match status" value="1"/>
</dbReference>
<dbReference type="Pfam" id="PF01227">
    <property type="entry name" value="GTP_cyclohydroI"/>
    <property type="match status" value="1"/>
</dbReference>
<dbReference type="SUPFAM" id="SSF55620">
    <property type="entry name" value="Tetrahydrobiopterin biosynthesis enzymes-like"/>
    <property type="match status" value="1"/>
</dbReference>
<dbReference type="PROSITE" id="PS00859">
    <property type="entry name" value="GTP_CYCLOHYDROL_1_1"/>
    <property type="match status" value="1"/>
</dbReference>
<reference key="1">
    <citation type="submission" date="2008-03" db="EMBL/GenBank/DDBJ databases">
        <title>Complete sequence of Thermoproteus neutrophilus V24Sta.</title>
        <authorList>
            <consortium name="US DOE Joint Genome Institute"/>
            <person name="Copeland A."/>
            <person name="Lucas S."/>
            <person name="Lapidus A."/>
            <person name="Glavina del Rio T."/>
            <person name="Dalin E."/>
            <person name="Tice H."/>
            <person name="Bruce D."/>
            <person name="Goodwin L."/>
            <person name="Pitluck S."/>
            <person name="Sims D."/>
            <person name="Brettin T."/>
            <person name="Detter J.C."/>
            <person name="Han C."/>
            <person name="Kuske C.R."/>
            <person name="Schmutz J."/>
            <person name="Larimer F."/>
            <person name="Land M."/>
            <person name="Hauser L."/>
            <person name="Kyrpides N."/>
            <person name="Mikhailova N."/>
            <person name="Biddle J.F."/>
            <person name="Zhang Z."/>
            <person name="Fitz-Gibbon S.T."/>
            <person name="Lowe T.M."/>
            <person name="Saltikov C."/>
            <person name="House C.H."/>
            <person name="Richardson P."/>
        </authorList>
    </citation>
    <scope>NUCLEOTIDE SEQUENCE [LARGE SCALE GENOMIC DNA]</scope>
    <source>
        <strain>DSM 2338 / JCM 9278 / NBRC 100436 / V24Sta</strain>
    </source>
</reference>
<keyword id="KW-0342">GTP-binding</keyword>
<keyword id="KW-0378">Hydrolase</keyword>
<keyword id="KW-0479">Metal-binding</keyword>
<keyword id="KW-0547">Nucleotide-binding</keyword>
<keyword id="KW-0554">One-carbon metabolism</keyword>
<keyword id="KW-0862">Zinc</keyword>
<feature type="chain" id="PRO_1000100205" description="GTP cyclohydrolase 1">
    <location>
        <begin position="1"/>
        <end position="187"/>
    </location>
</feature>
<feature type="binding site" evidence="1">
    <location>
        <position position="81"/>
    </location>
    <ligand>
        <name>Zn(2+)</name>
        <dbReference type="ChEBI" id="CHEBI:29105"/>
    </ligand>
</feature>
<feature type="binding site" evidence="1">
    <location>
        <position position="84"/>
    </location>
    <ligand>
        <name>Zn(2+)</name>
        <dbReference type="ChEBI" id="CHEBI:29105"/>
    </ligand>
</feature>
<feature type="binding site" evidence="1">
    <location>
        <position position="152"/>
    </location>
    <ligand>
        <name>Zn(2+)</name>
        <dbReference type="ChEBI" id="CHEBI:29105"/>
    </ligand>
</feature>